<evidence type="ECO:0000255" key="1">
    <source>
        <dbReference type="HAMAP-Rule" id="MF_01007"/>
    </source>
</evidence>
<reference key="1">
    <citation type="submission" date="2008-05" db="EMBL/GenBank/DDBJ databases">
        <title>Complete sequence of Chlorobium limicola DSM 245.</title>
        <authorList>
            <consortium name="US DOE Joint Genome Institute"/>
            <person name="Lucas S."/>
            <person name="Copeland A."/>
            <person name="Lapidus A."/>
            <person name="Glavina del Rio T."/>
            <person name="Dalin E."/>
            <person name="Tice H."/>
            <person name="Bruce D."/>
            <person name="Goodwin L."/>
            <person name="Pitluck S."/>
            <person name="Schmutz J."/>
            <person name="Larimer F."/>
            <person name="Land M."/>
            <person name="Hauser L."/>
            <person name="Kyrpides N."/>
            <person name="Ovchinnikova G."/>
            <person name="Zhao F."/>
            <person name="Li T."/>
            <person name="Liu Z."/>
            <person name="Overmann J."/>
            <person name="Bryant D.A."/>
            <person name="Richardson P."/>
        </authorList>
    </citation>
    <scope>NUCLEOTIDE SEQUENCE [LARGE SCALE GENOMIC DNA]</scope>
    <source>
        <strain>DSM 245 / NBRC 103803 / 6330</strain>
    </source>
</reference>
<feature type="chain" id="PRO_0000386798" description="Ribosomal RNA small subunit methyltransferase H">
    <location>
        <begin position="1"/>
        <end position="322"/>
    </location>
</feature>
<feature type="binding site" evidence="1">
    <location>
        <begin position="34"/>
        <end position="36"/>
    </location>
    <ligand>
        <name>S-adenosyl-L-methionine</name>
        <dbReference type="ChEBI" id="CHEBI:59789"/>
    </ligand>
</feature>
<feature type="binding site" evidence="1">
    <location>
        <position position="59"/>
    </location>
    <ligand>
        <name>S-adenosyl-L-methionine</name>
        <dbReference type="ChEBI" id="CHEBI:59789"/>
    </ligand>
</feature>
<feature type="binding site" evidence="1">
    <location>
        <position position="86"/>
    </location>
    <ligand>
        <name>S-adenosyl-L-methionine</name>
        <dbReference type="ChEBI" id="CHEBI:59789"/>
    </ligand>
</feature>
<feature type="binding site" evidence="1">
    <location>
        <position position="112"/>
    </location>
    <ligand>
        <name>S-adenosyl-L-methionine</name>
        <dbReference type="ChEBI" id="CHEBI:59789"/>
    </ligand>
</feature>
<feature type="binding site" evidence="1">
    <location>
        <position position="119"/>
    </location>
    <ligand>
        <name>S-adenosyl-L-methionine</name>
        <dbReference type="ChEBI" id="CHEBI:59789"/>
    </ligand>
</feature>
<gene>
    <name evidence="1" type="primary">rsmH</name>
    <name type="synonym">mraW</name>
    <name type="ordered locus">Clim_2510</name>
</gene>
<organism>
    <name type="scientific">Chlorobium limicola (strain DSM 245 / NBRC 103803 / 6330)</name>
    <dbReference type="NCBI Taxonomy" id="290315"/>
    <lineage>
        <taxon>Bacteria</taxon>
        <taxon>Pseudomonadati</taxon>
        <taxon>Chlorobiota</taxon>
        <taxon>Chlorobiia</taxon>
        <taxon>Chlorobiales</taxon>
        <taxon>Chlorobiaceae</taxon>
        <taxon>Chlorobium/Pelodictyon group</taxon>
        <taxon>Chlorobium</taxon>
    </lineage>
</organism>
<accession>B3EIL6</accession>
<proteinExistence type="inferred from homology"/>
<protein>
    <recommendedName>
        <fullName evidence="1">Ribosomal RNA small subunit methyltransferase H</fullName>
        <ecNumber evidence="1">2.1.1.199</ecNumber>
    </recommendedName>
    <alternativeName>
        <fullName evidence="1">16S rRNA m(4)C1402 methyltransferase</fullName>
    </alternativeName>
    <alternativeName>
        <fullName evidence="1">rRNA (cytosine-N(4)-)-methyltransferase RsmH</fullName>
    </alternativeName>
</protein>
<keyword id="KW-0963">Cytoplasm</keyword>
<keyword id="KW-0489">Methyltransferase</keyword>
<keyword id="KW-0698">rRNA processing</keyword>
<keyword id="KW-0949">S-adenosyl-L-methionine</keyword>
<keyword id="KW-0808">Transferase</keyword>
<comment type="function">
    <text evidence="1">Specifically methylates the N4 position of cytidine in position 1402 (C1402) of 16S rRNA.</text>
</comment>
<comment type="catalytic activity">
    <reaction evidence="1">
        <text>cytidine(1402) in 16S rRNA + S-adenosyl-L-methionine = N(4)-methylcytidine(1402) in 16S rRNA + S-adenosyl-L-homocysteine + H(+)</text>
        <dbReference type="Rhea" id="RHEA:42928"/>
        <dbReference type="Rhea" id="RHEA-COMP:10286"/>
        <dbReference type="Rhea" id="RHEA-COMP:10287"/>
        <dbReference type="ChEBI" id="CHEBI:15378"/>
        <dbReference type="ChEBI" id="CHEBI:57856"/>
        <dbReference type="ChEBI" id="CHEBI:59789"/>
        <dbReference type="ChEBI" id="CHEBI:74506"/>
        <dbReference type="ChEBI" id="CHEBI:82748"/>
        <dbReference type="EC" id="2.1.1.199"/>
    </reaction>
</comment>
<comment type="subcellular location">
    <subcellularLocation>
        <location evidence="1">Cytoplasm</location>
    </subcellularLocation>
</comment>
<comment type="similarity">
    <text evidence="1">Belongs to the methyltransferase superfamily. RsmH family.</text>
</comment>
<dbReference type="EC" id="2.1.1.199" evidence="1"/>
<dbReference type="EMBL" id="CP001097">
    <property type="protein sequence ID" value="ACD91528.1"/>
    <property type="molecule type" value="Genomic_DNA"/>
</dbReference>
<dbReference type="RefSeq" id="WP_012467392.1">
    <property type="nucleotide sequence ID" value="NC_010803.1"/>
</dbReference>
<dbReference type="SMR" id="B3EIL6"/>
<dbReference type="STRING" id="290315.Clim_2510"/>
<dbReference type="KEGG" id="cli:Clim_2510"/>
<dbReference type="eggNOG" id="COG0275">
    <property type="taxonomic scope" value="Bacteria"/>
</dbReference>
<dbReference type="HOGENOM" id="CLU_038422_3_0_10"/>
<dbReference type="OrthoDB" id="9806637at2"/>
<dbReference type="Proteomes" id="UP000008841">
    <property type="component" value="Chromosome"/>
</dbReference>
<dbReference type="GO" id="GO:0005737">
    <property type="term" value="C:cytoplasm"/>
    <property type="evidence" value="ECO:0007669"/>
    <property type="project" value="UniProtKB-SubCell"/>
</dbReference>
<dbReference type="GO" id="GO:0071424">
    <property type="term" value="F:rRNA (cytosine-N4-)-methyltransferase activity"/>
    <property type="evidence" value="ECO:0007669"/>
    <property type="project" value="UniProtKB-UniRule"/>
</dbReference>
<dbReference type="GO" id="GO:0070475">
    <property type="term" value="P:rRNA base methylation"/>
    <property type="evidence" value="ECO:0007669"/>
    <property type="project" value="UniProtKB-UniRule"/>
</dbReference>
<dbReference type="Gene3D" id="1.10.150.170">
    <property type="entry name" value="Putative methyltransferase TM0872, insert domain"/>
    <property type="match status" value="1"/>
</dbReference>
<dbReference type="Gene3D" id="3.40.50.150">
    <property type="entry name" value="Vaccinia Virus protein VP39"/>
    <property type="match status" value="1"/>
</dbReference>
<dbReference type="HAMAP" id="MF_01007">
    <property type="entry name" value="16SrRNA_methyltr_H"/>
    <property type="match status" value="1"/>
</dbReference>
<dbReference type="InterPro" id="IPR002903">
    <property type="entry name" value="RsmH"/>
</dbReference>
<dbReference type="InterPro" id="IPR023397">
    <property type="entry name" value="SAM-dep_MeTrfase_MraW_recog"/>
</dbReference>
<dbReference type="InterPro" id="IPR029063">
    <property type="entry name" value="SAM-dependent_MTases_sf"/>
</dbReference>
<dbReference type="NCBIfam" id="TIGR00006">
    <property type="entry name" value="16S rRNA (cytosine(1402)-N(4))-methyltransferase RsmH"/>
    <property type="match status" value="1"/>
</dbReference>
<dbReference type="PANTHER" id="PTHR11265:SF0">
    <property type="entry name" value="12S RRNA N4-METHYLCYTIDINE METHYLTRANSFERASE"/>
    <property type="match status" value="1"/>
</dbReference>
<dbReference type="PANTHER" id="PTHR11265">
    <property type="entry name" value="S-ADENOSYL-METHYLTRANSFERASE MRAW"/>
    <property type="match status" value="1"/>
</dbReference>
<dbReference type="Pfam" id="PF01795">
    <property type="entry name" value="Methyltransf_5"/>
    <property type="match status" value="1"/>
</dbReference>
<dbReference type="PIRSF" id="PIRSF004486">
    <property type="entry name" value="MraW"/>
    <property type="match status" value="1"/>
</dbReference>
<dbReference type="SUPFAM" id="SSF81799">
    <property type="entry name" value="Putative methyltransferase TM0872, insert domain"/>
    <property type="match status" value="1"/>
</dbReference>
<dbReference type="SUPFAM" id="SSF53335">
    <property type="entry name" value="S-adenosyl-L-methionine-dependent methyltransferases"/>
    <property type="match status" value="1"/>
</dbReference>
<sequence>MGIGSYHEPVLAAEVLQLLVRMPGVYVDGTLGGGGHSLAILEELERKGFLADSFLIGIDQDDHALKAASEKLSGFSGSTAIIKGNFSAIAAIVRKISAERHFTDSVAGILLDLGVSSAQIDTPERGFSYMRSGPLDMRMDPEAESSAADLVNTLSERELVTLFFRYGEEPRSRSIARGIIDYREKHGSILRTEELAEIIRLREARPDRVIKTLSRVFQALRVEVNRELEVLEQVLADGASLLSAQGRLAVISYHSLEDRMVKSFFTAQSSSDWGPRGVGLTEPLKKAEFAVVTRKPVASGQQELSLNPRSRSAKLRVLEKLA</sequence>
<name>RSMH_CHLL2</name>